<organism>
    <name type="scientific">Cupiennius salei</name>
    <name type="common">American wandering spider</name>
    <dbReference type="NCBI Taxonomy" id="6928"/>
    <lineage>
        <taxon>Eukaryota</taxon>
        <taxon>Metazoa</taxon>
        <taxon>Ecdysozoa</taxon>
        <taxon>Arthropoda</taxon>
        <taxon>Chelicerata</taxon>
        <taxon>Arachnida</taxon>
        <taxon>Araneae</taxon>
        <taxon>Araneomorphae</taxon>
        <taxon>Entelegynae</taxon>
        <taxon>Lycosoidea</taxon>
        <taxon>Ctenidae</taxon>
        <taxon>Cupiennius</taxon>
    </lineage>
</organism>
<comment type="subcellular location">
    <subcellularLocation>
        <location evidence="1">Secreted</location>
    </subcellularLocation>
</comment>
<comment type="tissue specificity">
    <text evidence="5">Expressed by the venom gland.</text>
</comment>
<comment type="mass spectrometry" mass="1058.562" method="Electrospray" evidence="1"/>
<comment type="similarity">
    <text evidence="4">Belongs to the cationic peptide 04 (cupiennin) family. 08 subfamily.</text>
</comment>
<feature type="peptide" id="PRO_0000421206" description="Short cationic peptide-4e" evidence="1">
    <location>
        <begin position="1"/>
        <end position="9"/>
    </location>
</feature>
<sequence length="9" mass="1059">GFGMLFKFL</sequence>
<evidence type="ECO:0000269" key="1">
    <source>
    </source>
</evidence>
<evidence type="ECO:0000303" key="2">
    <source>
    </source>
</evidence>
<evidence type="ECO:0000303" key="3">
    <source ref="2"/>
</evidence>
<evidence type="ECO:0000305" key="4"/>
<evidence type="ECO:0000305" key="5">
    <source>
    </source>
</evidence>
<name>TXS4E_CUPSA</name>
<reference key="1">
    <citation type="journal article" date="2012" name="FEBS J.">
        <title>Multicomponent venom of the spider Cupiennius salei: a bioanalytical investigation applying different strategies.</title>
        <authorList>
            <person name="Trachsel C."/>
            <person name="Siegemund D."/>
            <person name="Kampfer U."/>
            <person name="Kopp L.S."/>
            <person name="Buhr C."/>
            <person name="Grossmann J."/>
            <person name="Luthi C."/>
            <person name="Cunningham M."/>
            <person name="Nentwig W."/>
            <person name="Kuhn-Nentwig L."/>
            <person name="Schurch S."/>
            <person name="Schaller J."/>
        </authorList>
    </citation>
    <scope>PROTEIN SEQUENCE</scope>
    <scope>MASS SPECTROMETRY</scope>
    <source>
        <tissue>Venom</tissue>
    </source>
</reference>
<reference key="2">
    <citation type="unpublished observations" date="2015-06">
        <authorList>
            <person name="Kuhn-Nentwig L."/>
            <person name="Gohel T."/>
        </authorList>
    </citation>
    <scope>NOMENCLATURE</scope>
</reference>
<keyword id="KW-0903">Direct protein sequencing</keyword>
<keyword id="KW-0964">Secreted</keyword>
<keyword id="KW-0800">Toxin</keyword>
<accession>B3EWU7</accession>
<proteinExistence type="evidence at protein level"/>
<protein>
    <recommendedName>
        <fullName evidence="3">Short cationic peptide-4e</fullName>
        <shortName evidence="3">SCP-4e</shortName>
    </recommendedName>
    <alternativeName>
        <fullName evidence="2">Cupiennin 1-like peptide-1g</fullName>
    </alternativeName>
    <alternativeName>
        <fullName evidence="2">Short cationic peptide-1g</fullName>
        <shortName evidence="2">SCP-1g</shortName>
    </alternativeName>
    <alternativeName>
        <fullName evidence="3">Truncated variant of Cupiennin 4 family</fullName>
    </alternativeName>
</protein>
<dbReference type="GO" id="GO:0005576">
    <property type="term" value="C:extracellular region"/>
    <property type="evidence" value="ECO:0007669"/>
    <property type="project" value="UniProtKB-SubCell"/>
</dbReference>
<dbReference type="GO" id="GO:0090729">
    <property type="term" value="F:toxin activity"/>
    <property type="evidence" value="ECO:0007669"/>
    <property type="project" value="UniProtKB-KW"/>
</dbReference>